<proteinExistence type="inferred from homology"/>
<reference key="1">
    <citation type="journal article" date="2003" name="Proc. Natl. Acad. Sci. U.S.A.">
        <title>Complete genome sequence and analysis of Wolinella succinogenes.</title>
        <authorList>
            <person name="Baar C."/>
            <person name="Eppinger M."/>
            <person name="Raddatz G."/>
            <person name="Simon J."/>
            <person name="Lanz C."/>
            <person name="Klimmek O."/>
            <person name="Nandakumar R."/>
            <person name="Gross R."/>
            <person name="Rosinus A."/>
            <person name="Keller H."/>
            <person name="Jagtap P."/>
            <person name="Linke B."/>
            <person name="Meyer F."/>
            <person name="Lederer H."/>
            <person name="Schuster S.C."/>
        </authorList>
    </citation>
    <scope>NUCLEOTIDE SEQUENCE [LARGE SCALE GENOMIC DNA]</scope>
    <source>
        <strain>ATCC 29543 / DSM 1740 / CCUG 13145 / JCM 31913 / LMG 7466 / NCTC 11488 / FDC 602W</strain>
    </source>
</reference>
<protein>
    <recommendedName>
        <fullName evidence="1">Histidine--tRNA ligase</fullName>
        <ecNumber evidence="1">6.1.1.21</ecNumber>
    </recommendedName>
    <alternativeName>
        <fullName evidence="1">Histidyl-tRNA synthetase</fullName>
        <shortName evidence="1">HisRS</shortName>
    </alternativeName>
</protein>
<name>SYH_WOLSU</name>
<evidence type="ECO:0000255" key="1">
    <source>
        <dbReference type="HAMAP-Rule" id="MF_00127"/>
    </source>
</evidence>
<organism>
    <name type="scientific">Wolinella succinogenes (strain ATCC 29543 / DSM 1740 / CCUG 13145 / JCM 31913 / LMG 7466 / NCTC 11488 / FDC 602W)</name>
    <name type="common">Vibrio succinogenes</name>
    <dbReference type="NCBI Taxonomy" id="273121"/>
    <lineage>
        <taxon>Bacteria</taxon>
        <taxon>Pseudomonadati</taxon>
        <taxon>Campylobacterota</taxon>
        <taxon>Epsilonproteobacteria</taxon>
        <taxon>Campylobacterales</taxon>
        <taxon>Helicobacteraceae</taxon>
        <taxon>Wolinella</taxon>
    </lineage>
</organism>
<sequence>MKEQALITPRTLSGFKDRLPQEAMAKSRLLRTVSEVFEGFGFVPIETPHLEYAEILVKQGSDEIQKELYRFFDHGGRDVALRFDQTVPLARFISQHRNALGLPFKRYAIGNVFRGERAQRGRYREFTQCDFDFIGSESIGSDAEIIQVIYASLKALGIERFTISMNNRKILNGICDYFGVKEQTSDVLRIIDKLDKIGEESVIKELVEELGLSQESARGILGFTSLKQERSSEEFFAKVASYEGLSDSLREGMGEMRALYAILDTLEMDRACYKINFSIARGLGYYTGIVYETTLDALPSIGSVCSGGRYDNLTQSFSKERMSGVGASIGVDRLLAALEELGLLEGRGTSAQVLVACMEESQLAYSYKVAERLRTLGIKSEVYPEAVKPKRSLAYANSKGHPYVAVIGEDELKQGVVTLKDMQWGDQKPCISIEAAAEILLG</sequence>
<feature type="chain" id="PRO_0000136298" description="Histidine--tRNA ligase">
    <location>
        <begin position="1"/>
        <end position="442"/>
    </location>
</feature>
<comment type="catalytic activity">
    <reaction evidence="1">
        <text>tRNA(His) + L-histidine + ATP = L-histidyl-tRNA(His) + AMP + diphosphate + H(+)</text>
        <dbReference type="Rhea" id="RHEA:17313"/>
        <dbReference type="Rhea" id="RHEA-COMP:9665"/>
        <dbReference type="Rhea" id="RHEA-COMP:9689"/>
        <dbReference type="ChEBI" id="CHEBI:15378"/>
        <dbReference type="ChEBI" id="CHEBI:30616"/>
        <dbReference type="ChEBI" id="CHEBI:33019"/>
        <dbReference type="ChEBI" id="CHEBI:57595"/>
        <dbReference type="ChEBI" id="CHEBI:78442"/>
        <dbReference type="ChEBI" id="CHEBI:78527"/>
        <dbReference type="ChEBI" id="CHEBI:456215"/>
        <dbReference type="EC" id="6.1.1.21"/>
    </reaction>
</comment>
<comment type="subunit">
    <text evidence="1">Homodimer.</text>
</comment>
<comment type="subcellular location">
    <subcellularLocation>
        <location evidence="1">Cytoplasm</location>
    </subcellularLocation>
</comment>
<comment type="similarity">
    <text evidence="1">Belongs to the class-II aminoacyl-tRNA synthetase family.</text>
</comment>
<dbReference type="EC" id="6.1.1.21" evidence="1"/>
<dbReference type="EMBL" id="BX571660">
    <property type="protein sequence ID" value="CAE10508.1"/>
    <property type="molecule type" value="Genomic_DNA"/>
</dbReference>
<dbReference type="RefSeq" id="WP_011139292.1">
    <property type="nucleotide sequence ID" value="NC_005090.1"/>
</dbReference>
<dbReference type="SMR" id="Q7M8S6"/>
<dbReference type="STRING" id="273121.WS1449"/>
<dbReference type="KEGG" id="wsu:WS1449"/>
<dbReference type="eggNOG" id="COG0124">
    <property type="taxonomic scope" value="Bacteria"/>
</dbReference>
<dbReference type="HOGENOM" id="CLU_025113_3_0_7"/>
<dbReference type="Proteomes" id="UP000000422">
    <property type="component" value="Chromosome"/>
</dbReference>
<dbReference type="GO" id="GO:0005737">
    <property type="term" value="C:cytoplasm"/>
    <property type="evidence" value="ECO:0007669"/>
    <property type="project" value="UniProtKB-SubCell"/>
</dbReference>
<dbReference type="GO" id="GO:0005524">
    <property type="term" value="F:ATP binding"/>
    <property type="evidence" value="ECO:0007669"/>
    <property type="project" value="UniProtKB-UniRule"/>
</dbReference>
<dbReference type="GO" id="GO:0004821">
    <property type="term" value="F:histidine-tRNA ligase activity"/>
    <property type="evidence" value="ECO:0007669"/>
    <property type="project" value="UniProtKB-UniRule"/>
</dbReference>
<dbReference type="GO" id="GO:0006427">
    <property type="term" value="P:histidyl-tRNA aminoacylation"/>
    <property type="evidence" value="ECO:0007669"/>
    <property type="project" value="UniProtKB-UniRule"/>
</dbReference>
<dbReference type="CDD" id="cd00773">
    <property type="entry name" value="HisRS-like_core"/>
    <property type="match status" value="1"/>
</dbReference>
<dbReference type="CDD" id="cd00859">
    <property type="entry name" value="HisRS_anticodon"/>
    <property type="match status" value="1"/>
</dbReference>
<dbReference type="Gene3D" id="3.40.50.800">
    <property type="entry name" value="Anticodon-binding domain"/>
    <property type="match status" value="1"/>
</dbReference>
<dbReference type="Gene3D" id="3.30.930.10">
    <property type="entry name" value="Bira Bifunctional Protein, Domain 2"/>
    <property type="match status" value="1"/>
</dbReference>
<dbReference type="HAMAP" id="MF_00127">
    <property type="entry name" value="His_tRNA_synth"/>
    <property type="match status" value="1"/>
</dbReference>
<dbReference type="InterPro" id="IPR006195">
    <property type="entry name" value="aa-tRNA-synth_II"/>
</dbReference>
<dbReference type="InterPro" id="IPR045864">
    <property type="entry name" value="aa-tRNA-synth_II/BPL/LPL"/>
</dbReference>
<dbReference type="InterPro" id="IPR004154">
    <property type="entry name" value="Anticodon-bd"/>
</dbReference>
<dbReference type="InterPro" id="IPR036621">
    <property type="entry name" value="Anticodon-bd_dom_sf"/>
</dbReference>
<dbReference type="InterPro" id="IPR015807">
    <property type="entry name" value="His-tRNA-ligase"/>
</dbReference>
<dbReference type="InterPro" id="IPR041715">
    <property type="entry name" value="HisRS-like_core"/>
</dbReference>
<dbReference type="InterPro" id="IPR004516">
    <property type="entry name" value="HisRS/HisZ"/>
</dbReference>
<dbReference type="InterPro" id="IPR033656">
    <property type="entry name" value="HisRS_anticodon"/>
</dbReference>
<dbReference type="NCBIfam" id="TIGR00442">
    <property type="entry name" value="hisS"/>
    <property type="match status" value="1"/>
</dbReference>
<dbReference type="PANTHER" id="PTHR11476:SF7">
    <property type="entry name" value="HISTIDINE--TRNA LIGASE"/>
    <property type="match status" value="1"/>
</dbReference>
<dbReference type="PANTHER" id="PTHR11476">
    <property type="entry name" value="HISTIDYL-TRNA SYNTHETASE"/>
    <property type="match status" value="1"/>
</dbReference>
<dbReference type="Pfam" id="PF03129">
    <property type="entry name" value="HGTP_anticodon"/>
    <property type="match status" value="1"/>
</dbReference>
<dbReference type="Pfam" id="PF13393">
    <property type="entry name" value="tRNA-synt_His"/>
    <property type="match status" value="1"/>
</dbReference>
<dbReference type="PIRSF" id="PIRSF001549">
    <property type="entry name" value="His-tRNA_synth"/>
    <property type="match status" value="1"/>
</dbReference>
<dbReference type="SUPFAM" id="SSF52954">
    <property type="entry name" value="Class II aaRS ABD-related"/>
    <property type="match status" value="1"/>
</dbReference>
<dbReference type="SUPFAM" id="SSF55681">
    <property type="entry name" value="Class II aaRS and biotin synthetases"/>
    <property type="match status" value="1"/>
</dbReference>
<dbReference type="PROSITE" id="PS50862">
    <property type="entry name" value="AA_TRNA_LIGASE_II"/>
    <property type="match status" value="1"/>
</dbReference>
<accession>Q7M8S6</accession>
<gene>
    <name evidence="1" type="primary">hisS</name>
    <name type="ordered locus">WS1449</name>
</gene>
<keyword id="KW-0030">Aminoacyl-tRNA synthetase</keyword>
<keyword id="KW-0067">ATP-binding</keyword>
<keyword id="KW-0963">Cytoplasm</keyword>
<keyword id="KW-0436">Ligase</keyword>
<keyword id="KW-0547">Nucleotide-binding</keyword>
<keyword id="KW-0648">Protein biosynthesis</keyword>
<keyword id="KW-1185">Reference proteome</keyword>